<dbReference type="EC" id="3.5.1.15" evidence="1"/>
<dbReference type="EMBL" id="CP000552">
    <property type="protein sequence ID" value="ABM71461.1"/>
    <property type="molecule type" value="Genomic_DNA"/>
</dbReference>
<dbReference type="RefSeq" id="WP_011819575.1">
    <property type="nucleotide sequence ID" value="NC_008817.1"/>
</dbReference>
<dbReference type="SMR" id="A2BUK0"/>
<dbReference type="STRING" id="167542.P9515_02521"/>
<dbReference type="GeneID" id="60201013"/>
<dbReference type="KEGG" id="pmc:P9515_02521"/>
<dbReference type="eggNOG" id="COG2988">
    <property type="taxonomic scope" value="Bacteria"/>
</dbReference>
<dbReference type="HOGENOM" id="CLU_083292_0_0_3"/>
<dbReference type="OrthoDB" id="531770at2"/>
<dbReference type="Proteomes" id="UP000001589">
    <property type="component" value="Chromosome"/>
</dbReference>
<dbReference type="GO" id="GO:0005829">
    <property type="term" value="C:cytosol"/>
    <property type="evidence" value="ECO:0007669"/>
    <property type="project" value="TreeGrafter"/>
</dbReference>
<dbReference type="GO" id="GO:0019807">
    <property type="term" value="F:aspartoacylase activity"/>
    <property type="evidence" value="ECO:0007669"/>
    <property type="project" value="UniProtKB-UniRule"/>
</dbReference>
<dbReference type="GO" id="GO:0016788">
    <property type="term" value="F:hydrolase activity, acting on ester bonds"/>
    <property type="evidence" value="ECO:0007669"/>
    <property type="project" value="InterPro"/>
</dbReference>
<dbReference type="GO" id="GO:0008270">
    <property type="term" value="F:zinc ion binding"/>
    <property type="evidence" value="ECO:0007669"/>
    <property type="project" value="UniProtKB-UniRule"/>
</dbReference>
<dbReference type="Gene3D" id="2.20.25.160">
    <property type="match status" value="1"/>
</dbReference>
<dbReference type="Gene3D" id="3.40.630.10">
    <property type="entry name" value="Zn peptidases"/>
    <property type="match status" value="1"/>
</dbReference>
<dbReference type="HAMAP" id="MF_00704">
    <property type="entry name" value="Aspartoacylase"/>
    <property type="match status" value="1"/>
</dbReference>
<dbReference type="InterPro" id="IPR050178">
    <property type="entry name" value="AspA/AstE_fam"/>
</dbReference>
<dbReference type="InterPro" id="IPR016708">
    <property type="entry name" value="Aspartoacylase"/>
</dbReference>
<dbReference type="InterPro" id="IPR055438">
    <property type="entry name" value="AstE_AspA_cat"/>
</dbReference>
<dbReference type="InterPro" id="IPR007036">
    <property type="entry name" value="Aste_AspA_hybrid_dom"/>
</dbReference>
<dbReference type="NCBIfam" id="NF002601">
    <property type="entry name" value="PRK02259.1"/>
    <property type="match status" value="1"/>
</dbReference>
<dbReference type="PANTHER" id="PTHR15162">
    <property type="entry name" value="ASPARTOACYLASE"/>
    <property type="match status" value="1"/>
</dbReference>
<dbReference type="PANTHER" id="PTHR15162:SF7">
    <property type="entry name" value="SUCCINYLGLUTAMATE DESUCCINYLASE"/>
    <property type="match status" value="1"/>
</dbReference>
<dbReference type="Pfam" id="PF24827">
    <property type="entry name" value="AstE_AspA_cat"/>
    <property type="match status" value="1"/>
</dbReference>
<dbReference type="Pfam" id="PF04952">
    <property type="entry name" value="AstE_AspA_hybrid"/>
    <property type="match status" value="1"/>
</dbReference>
<dbReference type="PIRSF" id="PIRSF018001">
    <property type="entry name" value="Aspartoacylase"/>
    <property type="match status" value="1"/>
</dbReference>
<dbReference type="SUPFAM" id="SSF53187">
    <property type="entry name" value="Zn-dependent exopeptidases"/>
    <property type="match status" value="1"/>
</dbReference>
<proteinExistence type="inferred from homology"/>
<evidence type="ECO:0000255" key="1">
    <source>
        <dbReference type="HAMAP-Rule" id="MF_00704"/>
    </source>
</evidence>
<reference key="1">
    <citation type="journal article" date="2007" name="PLoS Genet.">
        <title>Patterns and implications of gene gain and loss in the evolution of Prochlorococcus.</title>
        <authorList>
            <person name="Kettler G.C."/>
            <person name="Martiny A.C."/>
            <person name="Huang K."/>
            <person name="Zucker J."/>
            <person name="Coleman M.L."/>
            <person name="Rodrigue S."/>
            <person name="Chen F."/>
            <person name="Lapidus A."/>
            <person name="Ferriera S."/>
            <person name="Johnson J."/>
            <person name="Steglich C."/>
            <person name="Church G.M."/>
            <person name="Richardson P."/>
            <person name="Chisholm S.W."/>
        </authorList>
    </citation>
    <scope>NUCLEOTIDE SEQUENCE [LARGE SCALE GENOMIC DNA]</scope>
    <source>
        <strain>MIT 9515</strain>
    </source>
</reference>
<organism>
    <name type="scientific">Prochlorococcus marinus (strain MIT 9515)</name>
    <dbReference type="NCBI Taxonomy" id="167542"/>
    <lineage>
        <taxon>Bacteria</taxon>
        <taxon>Bacillati</taxon>
        <taxon>Cyanobacteriota</taxon>
        <taxon>Cyanophyceae</taxon>
        <taxon>Synechococcales</taxon>
        <taxon>Prochlorococcaceae</taxon>
        <taxon>Prochlorococcus</taxon>
    </lineage>
</organism>
<protein>
    <recommendedName>
        <fullName evidence="1">Probable aspartoacylase</fullName>
        <ecNumber evidence="1">3.5.1.15</ecNumber>
    </recommendedName>
</protein>
<name>ASPA_PROM5</name>
<sequence length="298" mass="34171">MNSGKILIVSSTHGNEINPVWSVNQYSKQGNIIDKNIEYKFIIGNPLAYEKGCRYIDKDLNRSFNLIKNNHDTSIYEIRRANFLVEKFGVNGSEPCDIAIDLHTTTANMGTSIVMYGRREKDFCLAALLQHKFGLPIYLHEKDEKQTGFLVEAWPCGLVIEIGPVAQNFYDPKIINRFLIIISSLREEINKLKNKQKQLPKLVIVHVHQGSIDYPRGEDGNINALIHPKRMNQDWKPIKKGDPLFMDMEGCTKSYNGKNTLWPVFIGEVAYKEKNIAMSYTKKEVINLPTQICEDFFN</sequence>
<feature type="chain" id="PRO_1000045516" description="Probable aspartoacylase">
    <location>
        <begin position="1"/>
        <end position="298"/>
    </location>
</feature>
<feature type="binding site" evidence="1">
    <location>
        <position position="13"/>
    </location>
    <ligand>
        <name>Zn(2+)</name>
        <dbReference type="ChEBI" id="CHEBI:29105"/>
    </ligand>
</feature>
<feature type="binding site" evidence="1">
    <location>
        <position position="16"/>
    </location>
    <ligand>
        <name>Zn(2+)</name>
        <dbReference type="ChEBI" id="CHEBI:29105"/>
    </ligand>
</feature>
<feature type="binding site" evidence="1">
    <location>
        <position position="54"/>
    </location>
    <ligand>
        <name>substrate</name>
    </ligand>
</feature>
<feature type="binding site" evidence="1">
    <location>
        <begin position="61"/>
        <end position="62"/>
    </location>
    <ligand>
        <name>substrate</name>
    </ligand>
</feature>
<feature type="binding site" evidence="1">
    <location>
        <position position="103"/>
    </location>
    <ligand>
        <name>Zn(2+)</name>
        <dbReference type="ChEBI" id="CHEBI:29105"/>
    </ligand>
</feature>
<feature type="binding site" evidence="1">
    <location>
        <position position="161"/>
    </location>
    <ligand>
        <name>substrate</name>
    </ligand>
</feature>
<feature type="binding site" evidence="1">
    <location>
        <position position="271"/>
    </location>
    <ligand>
        <name>substrate</name>
    </ligand>
</feature>
<accession>A2BUK0</accession>
<comment type="catalytic activity">
    <reaction evidence="1">
        <text>an N-acyl-L-aspartate + H2O = a carboxylate + L-aspartate</text>
        <dbReference type="Rhea" id="RHEA:10872"/>
        <dbReference type="ChEBI" id="CHEBI:15377"/>
        <dbReference type="ChEBI" id="CHEBI:29067"/>
        <dbReference type="ChEBI" id="CHEBI:29991"/>
        <dbReference type="ChEBI" id="CHEBI:58497"/>
        <dbReference type="EC" id="3.5.1.15"/>
    </reaction>
</comment>
<comment type="cofactor">
    <cofactor evidence="1">
        <name>Zn(2+)</name>
        <dbReference type="ChEBI" id="CHEBI:29105"/>
    </cofactor>
    <text evidence="1">Binds 1 zinc ion per subunit.</text>
</comment>
<comment type="similarity">
    <text evidence="1">Belongs to the AspA/AstE family. Aspartoacylase subfamily.</text>
</comment>
<keyword id="KW-0378">Hydrolase</keyword>
<keyword id="KW-0479">Metal-binding</keyword>
<keyword id="KW-0862">Zinc</keyword>
<gene>
    <name type="ordered locus">P9515_02521</name>
</gene>